<sequence length="349" mass="37891">MDENKSKALQAALSQIEKQFGKNTVMRLGDNTVQAVEAVSTGSLTLDIALGIGGLPKGRIIEIYGPESSGKTTMTLQAIAQCQKSGGTCAFIDAEHALDPQYARKLGVDIDNLLVSQPDNGEQALEIADMLVRSGAIDLIVVDSVAALTPKAEIEGEMGDSHMGLQARLMSQALRKITGNAKRSNCMVIFINQIRMKIGVMFGSPETTTGGNALKFYASVRLDIRRIGQVKEGDEIVGSETKVKVVKNKMAPPFKEAIFQILYGKGTNQLGELVDLAVQQDIVQKAGAWYSYQGNKIGQGKNNVIRYFEENTQIAEEIERNIREQLLTTGTNGAVQIEDEEEPDLLLES</sequence>
<organism>
    <name type="scientific">Acinetobacter baumannii (strain SDF)</name>
    <dbReference type="NCBI Taxonomy" id="509170"/>
    <lineage>
        <taxon>Bacteria</taxon>
        <taxon>Pseudomonadati</taxon>
        <taxon>Pseudomonadota</taxon>
        <taxon>Gammaproteobacteria</taxon>
        <taxon>Moraxellales</taxon>
        <taxon>Moraxellaceae</taxon>
        <taxon>Acinetobacter</taxon>
        <taxon>Acinetobacter calcoaceticus/baumannii complex</taxon>
    </lineage>
</organism>
<evidence type="ECO:0000255" key="1">
    <source>
        <dbReference type="HAMAP-Rule" id="MF_00268"/>
    </source>
</evidence>
<feature type="chain" id="PRO_1000114307" description="Protein RecA">
    <location>
        <begin position="1"/>
        <end position="349"/>
    </location>
</feature>
<feature type="binding site" evidence="1">
    <location>
        <begin position="65"/>
        <end position="72"/>
    </location>
    <ligand>
        <name>ATP</name>
        <dbReference type="ChEBI" id="CHEBI:30616"/>
    </ligand>
</feature>
<comment type="function">
    <text evidence="1">Can catalyze the hydrolysis of ATP in the presence of single-stranded DNA, the ATP-dependent uptake of single-stranded DNA by duplex DNA, and the ATP-dependent hybridization of homologous single-stranded DNAs. It interacts with LexA causing its activation and leading to its autocatalytic cleavage.</text>
</comment>
<comment type="subcellular location">
    <subcellularLocation>
        <location evidence="1">Cytoplasm</location>
    </subcellularLocation>
</comment>
<comment type="similarity">
    <text evidence="1">Belongs to the RecA family.</text>
</comment>
<proteinExistence type="inferred from homology"/>
<keyword id="KW-0067">ATP-binding</keyword>
<keyword id="KW-0963">Cytoplasm</keyword>
<keyword id="KW-0227">DNA damage</keyword>
<keyword id="KW-0233">DNA recombination</keyword>
<keyword id="KW-0234">DNA repair</keyword>
<keyword id="KW-0238">DNA-binding</keyword>
<keyword id="KW-0547">Nucleotide-binding</keyword>
<keyword id="KW-0742">SOS response</keyword>
<gene>
    <name evidence="1" type="primary">recA</name>
    <name type="ordered locus">ABSDF1694</name>
</gene>
<dbReference type="EMBL" id="CU468230">
    <property type="protein sequence ID" value="CAP01033.1"/>
    <property type="molecule type" value="Genomic_DNA"/>
</dbReference>
<dbReference type="SMR" id="B0VMV7"/>
<dbReference type="KEGG" id="abm:ABSDF1694"/>
<dbReference type="HOGENOM" id="CLU_040469_3_2_6"/>
<dbReference type="Proteomes" id="UP000001741">
    <property type="component" value="Chromosome"/>
</dbReference>
<dbReference type="GO" id="GO:0005829">
    <property type="term" value="C:cytosol"/>
    <property type="evidence" value="ECO:0007669"/>
    <property type="project" value="TreeGrafter"/>
</dbReference>
<dbReference type="GO" id="GO:0005524">
    <property type="term" value="F:ATP binding"/>
    <property type="evidence" value="ECO:0007669"/>
    <property type="project" value="UniProtKB-UniRule"/>
</dbReference>
<dbReference type="GO" id="GO:0016887">
    <property type="term" value="F:ATP hydrolysis activity"/>
    <property type="evidence" value="ECO:0007669"/>
    <property type="project" value="InterPro"/>
</dbReference>
<dbReference type="GO" id="GO:0140664">
    <property type="term" value="F:ATP-dependent DNA damage sensor activity"/>
    <property type="evidence" value="ECO:0007669"/>
    <property type="project" value="InterPro"/>
</dbReference>
<dbReference type="GO" id="GO:0003684">
    <property type="term" value="F:damaged DNA binding"/>
    <property type="evidence" value="ECO:0007669"/>
    <property type="project" value="UniProtKB-UniRule"/>
</dbReference>
<dbReference type="GO" id="GO:0003697">
    <property type="term" value="F:single-stranded DNA binding"/>
    <property type="evidence" value="ECO:0007669"/>
    <property type="project" value="UniProtKB-UniRule"/>
</dbReference>
<dbReference type="GO" id="GO:0006310">
    <property type="term" value="P:DNA recombination"/>
    <property type="evidence" value="ECO:0007669"/>
    <property type="project" value="UniProtKB-UniRule"/>
</dbReference>
<dbReference type="GO" id="GO:0006281">
    <property type="term" value="P:DNA repair"/>
    <property type="evidence" value="ECO:0007669"/>
    <property type="project" value="UniProtKB-UniRule"/>
</dbReference>
<dbReference type="GO" id="GO:0009432">
    <property type="term" value="P:SOS response"/>
    <property type="evidence" value="ECO:0007669"/>
    <property type="project" value="UniProtKB-UniRule"/>
</dbReference>
<dbReference type="CDD" id="cd00983">
    <property type="entry name" value="RecA"/>
    <property type="match status" value="1"/>
</dbReference>
<dbReference type="FunFam" id="3.40.50.300:FF:000087">
    <property type="entry name" value="Recombinase RecA"/>
    <property type="match status" value="1"/>
</dbReference>
<dbReference type="Gene3D" id="3.40.50.300">
    <property type="entry name" value="P-loop containing nucleotide triphosphate hydrolases"/>
    <property type="match status" value="1"/>
</dbReference>
<dbReference type="HAMAP" id="MF_00268">
    <property type="entry name" value="RecA"/>
    <property type="match status" value="1"/>
</dbReference>
<dbReference type="InterPro" id="IPR003593">
    <property type="entry name" value="AAA+_ATPase"/>
</dbReference>
<dbReference type="InterPro" id="IPR013765">
    <property type="entry name" value="DNA_recomb/repair_RecA"/>
</dbReference>
<dbReference type="InterPro" id="IPR020584">
    <property type="entry name" value="DNA_recomb/repair_RecA_CS"/>
</dbReference>
<dbReference type="InterPro" id="IPR027417">
    <property type="entry name" value="P-loop_NTPase"/>
</dbReference>
<dbReference type="InterPro" id="IPR049261">
    <property type="entry name" value="RecA-like_C"/>
</dbReference>
<dbReference type="InterPro" id="IPR049428">
    <property type="entry name" value="RecA-like_N"/>
</dbReference>
<dbReference type="InterPro" id="IPR020588">
    <property type="entry name" value="RecA_ATP-bd"/>
</dbReference>
<dbReference type="InterPro" id="IPR023400">
    <property type="entry name" value="RecA_C_sf"/>
</dbReference>
<dbReference type="InterPro" id="IPR020587">
    <property type="entry name" value="RecA_monomer-monomer_interface"/>
</dbReference>
<dbReference type="NCBIfam" id="TIGR02012">
    <property type="entry name" value="tigrfam_recA"/>
    <property type="match status" value="1"/>
</dbReference>
<dbReference type="PANTHER" id="PTHR45900:SF1">
    <property type="entry name" value="MITOCHONDRIAL DNA REPAIR PROTEIN RECA HOMOLOG-RELATED"/>
    <property type="match status" value="1"/>
</dbReference>
<dbReference type="PANTHER" id="PTHR45900">
    <property type="entry name" value="RECA"/>
    <property type="match status" value="1"/>
</dbReference>
<dbReference type="Pfam" id="PF00154">
    <property type="entry name" value="RecA"/>
    <property type="match status" value="1"/>
</dbReference>
<dbReference type="Pfam" id="PF21096">
    <property type="entry name" value="RecA_C"/>
    <property type="match status" value="1"/>
</dbReference>
<dbReference type="PRINTS" id="PR00142">
    <property type="entry name" value="RECA"/>
</dbReference>
<dbReference type="SMART" id="SM00382">
    <property type="entry name" value="AAA"/>
    <property type="match status" value="1"/>
</dbReference>
<dbReference type="SUPFAM" id="SSF52540">
    <property type="entry name" value="P-loop containing nucleoside triphosphate hydrolases"/>
    <property type="match status" value="1"/>
</dbReference>
<dbReference type="SUPFAM" id="SSF54752">
    <property type="entry name" value="RecA protein, C-terminal domain"/>
    <property type="match status" value="1"/>
</dbReference>
<dbReference type="PROSITE" id="PS00321">
    <property type="entry name" value="RECA_1"/>
    <property type="match status" value="1"/>
</dbReference>
<dbReference type="PROSITE" id="PS50162">
    <property type="entry name" value="RECA_2"/>
    <property type="match status" value="1"/>
</dbReference>
<dbReference type="PROSITE" id="PS50163">
    <property type="entry name" value="RECA_3"/>
    <property type="match status" value="1"/>
</dbReference>
<reference key="1">
    <citation type="journal article" date="2008" name="PLoS ONE">
        <title>Comparative analysis of Acinetobacters: three genomes for three lifestyles.</title>
        <authorList>
            <person name="Vallenet D."/>
            <person name="Nordmann P."/>
            <person name="Barbe V."/>
            <person name="Poirel L."/>
            <person name="Mangenot S."/>
            <person name="Bataille E."/>
            <person name="Dossat C."/>
            <person name="Gas S."/>
            <person name="Kreimeyer A."/>
            <person name="Lenoble P."/>
            <person name="Oztas S."/>
            <person name="Poulain J."/>
            <person name="Segurens B."/>
            <person name="Robert C."/>
            <person name="Abergel C."/>
            <person name="Claverie J.-M."/>
            <person name="Raoult D."/>
            <person name="Medigue C."/>
            <person name="Weissenbach J."/>
            <person name="Cruveiller S."/>
        </authorList>
    </citation>
    <scope>NUCLEOTIDE SEQUENCE [LARGE SCALE GENOMIC DNA]</scope>
    <source>
        <strain>SDF</strain>
    </source>
</reference>
<accession>B0VMV7</accession>
<name>RECA_ACIBS</name>
<protein>
    <recommendedName>
        <fullName evidence="1">Protein RecA</fullName>
    </recommendedName>
    <alternativeName>
        <fullName evidence="1">Recombinase A</fullName>
    </alternativeName>
</protein>